<organism>
    <name type="scientific">Actinobacillus succinogenes (strain ATCC 55618 / DSM 22257 / CCUG 43843 / 130Z)</name>
    <dbReference type="NCBI Taxonomy" id="339671"/>
    <lineage>
        <taxon>Bacteria</taxon>
        <taxon>Pseudomonadati</taxon>
        <taxon>Pseudomonadota</taxon>
        <taxon>Gammaproteobacteria</taxon>
        <taxon>Pasteurellales</taxon>
        <taxon>Pasteurellaceae</taxon>
        <taxon>Actinobacillus</taxon>
    </lineage>
</organism>
<reference key="1">
    <citation type="journal article" date="2010" name="BMC Genomics">
        <title>A genomic perspective on the potential of Actinobacillus succinogenes for industrial succinate production.</title>
        <authorList>
            <person name="McKinlay J.B."/>
            <person name="Laivenieks M."/>
            <person name="Schindler B.D."/>
            <person name="McKinlay A.A."/>
            <person name="Siddaramappa S."/>
            <person name="Challacombe J.F."/>
            <person name="Lowry S.R."/>
            <person name="Clum A."/>
            <person name="Lapidus A.L."/>
            <person name="Burkhart K.B."/>
            <person name="Harkins V."/>
            <person name="Vieille C."/>
        </authorList>
    </citation>
    <scope>NUCLEOTIDE SEQUENCE [LARGE SCALE GENOMIC DNA]</scope>
    <source>
        <strain>ATCC 55618 / DSM 22257 / CCUG 43843 / 130Z</strain>
    </source>
</reference>
<dbReference type="EMBL" id="CP000746">
    <property type="protein sequence ID" value="ABR74269.1"/>
    <property type="molecule type" value="Genomic_DNA"/>
</dbReference>
<dbReference type="RefSeq" id="WP_012072647.1">
    <property type="nucleotide sequence ID" value="NC_009655.1"/>
</dbReference>
<dbReference type="SMR" id="A6VMS2"/>
<dbReference type="STRING" id="339671.Asuc_0899"/>
<dbReference type="KEGG" id="asu:Asuc_0899"/>
<dbReference type="eggNOG" id="COG3381">
    <property type="taxonomic scope" value="Bacteria"/>
</dbReference>
<dbReference type="HOGENOM" id="CLU_077650_4_0_6"/>
<dbReference type="OrthoDB" id="7849731at2"/>
<dbReference type="Proteomes" id="UP000001114">
    <property type="component" value="Chromosome"/>
</dbReference>
<dbReference type="GO" id="GO:0005737">
    <property type="term" value="C:cytoplasm"/>
    <property type="evidence" value="ECO:0007669"/>
    <property type="project" value="UniProtKB-SubCell"/>
</dbReference>
<dbReference type="GO" id="GO:0051259">
    <property type="term" value="P:protein complex oligomerization"/>
    <property type="evidence" value="ECO:0007669"/>
    <property type="project" value="InterPro"/>
</dbReference>
<dbReference type="GO" id="GO:0006457">
    <property type="term" value="P:protein folding"/>
    <property type="evidence" value="ECO:0007669"/>
    <property type="project" value="UniProtKB-UniRule"/>
</dbReference>
<dbReference type="Gene3D" id="1.20.120.1820">
    <property type="match status" value="1"/>
</dbReference>
<dbReference type="Gene3D" id="1.20.1280.20">
    <property type="entry name" value="HscB, C-terminal domain"/>
    <property type="match status" value="1"/>
</dbReference>
<dbReference type="HAMAP" id="MF_01150">
    <property type="entry name" value="TorD"/>
    <property type="match status" value="1"/>
</dbReference>
<dbReference type="InterPro" id="IPR023069">
    <property type="entry name" value="Chaperone_TorD"/>
</dbReference>
<dbReference type="InterPro" id="IPR020945">
    <property type="entry name" value="DMSO/NO3_reduct_chaperone"/>
</dbReference>
<dbReference type="InterPro" id="IPR036386">
    <property type="entry name" value="HscB_C_sf"/>
</dbReference>
<dbReference type="InterPro" id="IPR036411">
    <property type="entry name" value="TorD-like_sf"/>
</dbReference>
<dbReference type="InterPro" id="IPR050289">
    <property type="entry name" value="TorD/DmsD_chaperones"/>
</dbReference>
<dbReference type="NCBIfam" id="NF003442">
    <property type="entry name" value="PRK04976.1"/>
    <property type="match status" value="1"/>
</dbReference>
<dbReference type="PANTHER" id="PTHR34227:SF11">
    <property type="entry name" value="CHAPERONE PROTEIN TORD"/>
    <property type="match status" value="1"/>
</dbReference>
<dbReference type="PANTHER" id="PTHR34227">
    <property type="entry name" value="CHAPERONE PROTEIN YCDY"/>
    <property type="match status" value="1"/>
</dbReference>
<dbReference type="Pfam" id="PF02613">
    <property type="entry name" value="Nitrate_red_del"/>
    <property type="match status" value="1"/>
</dbReference>
<dbReference type="SUPFAM" id="SSF89155">
    <property type="entry name" value="TorD-like"/>
    <property type="match status" value="1"/>
</dbReference>
<sequence length="193" mass="22542">MIALEKDEKLLILNWLRNLLARELSDEQLQTLQAVEFSQFFAFLAEIGFEKQSSALQQEIQKIALFQHPRLELAADFTQCFLLEGKVSALPYASAYLDGQSLKQNLAKMDRYLEHFQLQINRQTNEPSDHLVVYLEVLIKLLEQNKTTEAKEFIQQQLLTWFPQFAAKTEKTNIRTNFYPILVKLLFAVLQNF</sequence>
<keyword id="KW-0143">Chaperone</keyword>
<keyword id="KW-0963">Cytoplasm</keyword>
<keyword id="KW-1185">Reference proteome</keyword>
<comment type="function">
    <text evidence="1">Involved in the biogenesis of TorA. Acts on TorA before the insertion of the molybdenum cofactor and, as a result, probably favors a conformation of the apoenzyme that is competent for acquiring the cofactor.</text>
</comment>
<comment type="subcellular location">
    <subcellularLocation>
        <location evidence="1">Cytoplasm</location>
    </subcellularLocation>
</comment>
<comment type="similarity">
    <text evidence="1">Belongs to the TorD/DmsD family. TorD subfamily.</text>
</comment>
<gene>
    <name evidence="1" type="primary">torD</name>
    <name type="ordered locus">Asuc_0899</name>
</gene>
<evidence type="ECO:0000255" key="1">
    <source>
        <dbReference type="HAMAP-Rule" id="MF_01150"/>
    </source>
</evidence>
<feature type="chain" id="PRO_0000414889" description="Chaperone protein TorD">
    <location>
        <begin position="1"/>
        <end position="193"/>
    </location>
</feature>
<protein>
    <recommendedName>
        <fullName evidence="1">Chaperone protein TorD</fullName>
    </recommendedName>
</protein>
<proteinExistence type="inferred from homology"/>
<name>TORD_ACTSZ</name>
<accession>A6VMS2</accession>